<evidence type="ECO:0000250" key="1"/>
<evidence type="ECO:0000269" key="2">
    <source>
    </source>
</evidence>
<evidence type="ECO:0000303" key="3">
    <source>
    </source>
</evidence>
<evidence type="ECO:0000305" key="4"/>
<organism>
    <name type="scientific">Homo sapiens</name>
    <name type="common">Human</name>
    <dbReference type="NCBI Taxonomy" id="9606"/>
    <lineage>
        <taxon>Eukaryota</taxon>
        <taxon>Metazoa</taxon>
        <taxon>Chordata</taxon>
        <taxon>Craniata</taxon>
        <taxon>Vertebrata</taxon>
        <taxon>Euteleostomi</taxon>
        <taxon>Mammalia</taxon>
        <taxon>Eutheria</taxon>
        <taxon>Euarchontoglires</taxon>
        <taxon>Primates</taxon>
        <taxon>Haplorrhini</taxon>
        <taxon>Catarrhini</taxon>
        <taxon>Hominidae</taxon>
        <taxon>Homo</taxon>
    </lineage>
</organism>
<feature type="chain" id="PRO_0000305083" description="Trafficking protein particle complex subunit 3-like protein">
    <location>
        <begin position="1"/>
        <end position="181"/>
    </location>
</feature>
<feature type="lipid moiety-binding region" description="S-palmitoyl cysteine" evidence="1">
    <location>
        <position position="68"/>
    </location>
</feature>
<feature type="splice variant" id="VSP_028222" description="In isoform 2." evidence="3">
    <location>
        <begin position="1"/>
        <end position="84"/>
    </location>
</feature>
<comment type="function">
    <text evidence="1">May play a role in vesicular transport from endoplasmic reticulum to Golgi.</text>
</comment>
<comment type="subunit">
    <text evidence="2">Homodimer. Component of the multisubunit TRAPP (transport protein particle) complex, which includes at least TRAPPC2, TRAPPC2L, TRAPPC3, TRAPPC3L, TRAPPC4, TRAPPC5, TRAPPC8, TRAPPC9, TRAPPC10, TRAPPC11 and TRAPPC12.</text>
</comment>
<comment type="subcellular location">
    <subcellularLocation>
        <location evidence="1">Golgi apparatus</location>
        <location evidence="1">cis-Golgi network</location>
    </subcellularLocation>
    <subcellularLocation>
        <location evidence="1">Endoplasmic reticulum</location>
    </subcellularLocation>
</comment>
<comment type="alternative products">
    <event type="alternative splicing"/>
    <isoform>
        <id>Q5T215-1</id>
        <name>1</name>
        <sequence type="displayed"/>
    </isoform>
    <isoform>
        <id>Q5T215-2</id>
        <name>2</name>
        <sequence type="described" ref="VSP_028222"/>
    </isoform>
</comment>
<comment type="similarity">
    <text evidence="4">Belongs to the TRAPP small subunits family. BET3 subfamily.</text>
</comment>
<name>TPC3L_HUMAN</name>
<gene>
    <name type="primary">TRAPPC3L</name>
    <name type="synonym">BET3L</name>
</gene>
<reference key="1">
    <citation type="journal article" date="2003" name="Nature">
        <title>The DNA sequence and analysis of human chromosome 6.</title>
        <authorList>
            <person name="Mungall A.J."/>
            <person name="Palmer S.A."/>
            <person name="Sims S.K."/>
            <person name="Edwards C.A."/>
            <person name="Ashurst J.L."/>
            <person name="Wilming L."/>
            <person name="Jones M.C."/>
            <person name="Horton R."/>
            <person name="Hunt S.E."/>
            <person name="Scott C.E."/>
            <person name="Gilbert J.G.R."/>
            <person name="Clamp M.E."/>
            <person name="Bethel G."/>
            <person name="Milne S."/>
            <person name="Ainscough R."/>
            <person name="Almeida J.P."/>
            <person name="Ambrose K.D."/>
            <person name="Andrews T.D."/>
            <person name="Ashwell R.I.S."/>
            <person name="Babbage A.K."/>
            <person name="Bagguley C.L."/>
            <person name="Bailey J."/>
            <person name="Banerjee R."/>
            <person name="Barker D.J."/>
            <person name="Barlow K.F."/>
            <person name="Bates K."/>
            <person name="Beare D.M."/>
            <person name="Beasley H."/>
            <person name="Beasley O."/>
            <person name="Bird C.P."/>
            <person name="Blakey S.E."/>
            <person name="Bray-Allen S."/>
            <person name="Brook J."/>
            <person name="Brown A.J."/>
            <person name="Brown J.Y."/>
            <person name="Burford D.C."/>
            <person name="Burrill W."/>
            <person name="Burton J."/>
            <person name="Carder C."/>
            <person name="Carter N.P."/>
            <person name="Chapman J.C."/>
            <person name="Clark S.Y."/>
            <person name="Clark G."/>
            <person name="Clee C.M."/>
            <person name="Clegg S."/>
            <person name="Cobley V."/>
            <person name="Collier R.E."/>
            <person name="Collins J.E."/>
            <person name="Colman L.K."/>
            <person name="Corby N.R."/>
            <person name="Coville G.J."/>
            <person name="Culley K.M."/>
            <person name="Dhami P."/>
            <person name="Davies J."/>
            <person name="Dunn M."/>
            <person name="Earthrowl M.E."/>
            <person name="Ellington A.E."/>
            <person name="Evans K.A."/>
            <person name="Faulkner L."/>
            <person name="Francis M.D."/>
            <person name="Frankish A."/>
            <person name="Frankland J."/>
            <person name="French L."/>
            <person name="Garner P."/>
            <person name="Garnett J."/>
            <person name="Ghori M.J."/>
            <person name="Gilby L.M."/>
            <person name="Gillson C.J."/>
            <person name="Glithero R.J."/>
            <person name="Grafham D.V."/>
            <person name="Grant M."/>
            <person name="Gribble S."/>
            <person name="Griffiths C."/>
            <person name="Griffiths M.N.D."/>
            <person name="Hall R."/>
            <person name="Halls K.S."/>
            <person name="Hammond S."/>
            <person name="Harley J.L."/>
            <person name="Hart E.A."/>
            <person name="Heath P.D."/>
            <person name="Heathcott R."/>
            <person name="Holmes S.J."/>
            <person name="Howden P.J."/>
            <person name="Howe K.L."/>
            <person name="Howell G.R."/>
            <person name="Huckle E."/>
            <person name="Humphray S.J."/>
            <person name="Humphries M.D."/>
            <person name="Hunt A.R."/>
            <person name="Johnson C.M."/>
            <person name="Joy A.A."/>
            <person name="Kay M."/>
            <person name="Keenan S.J."/>
            <person name="Kimberley A.M."/>
            <person name="King A."/>
            <person name="Laird G.K."/>
            <person name="Langford C."/>
            <person name="Lawlor S."/>
            <person name="Leongamornlert D.A."/>
            <person name="Leversha M."/>
            <person name="Lloyd C.R."/>
            <person name="Lloyd D.M."/>
            <person name="Loveland J.E."/>
            <person name="Lovell J."/>
            <person name="Martin S."/>
            <person name="Mashreghi-Mohammadi M."/>
            <person name="Maslen G.L."/>
            <person name="Matthews L."/>
            <person name="McCann O.T."/>
            <person name="McLaren S.J."/>
            <person name="McLay K."/>
            <person name="McMurray A."/>
            <person name="Moore M.J.F."/>
            <person name="Mullikin J.C."/>
            <person name="Niblett D."/>
            <person name="Nickerson T."/>
            <person name="Novik K.L."/>
            <person name="Oliver K."/>
            <person name="Overton-Larty E.K."/>
            <person name="Parker A."/>
            <person name="Patel R."/>
            <person name="Pearce A.V."/>
            <person name="Peck A.I."/>
            <person name="Phillimore B.J.C.T."/>
            <person name="Phillips S."/>
            <person name="Plumb R.W."/>
            <person name="Porter K.M."/>
            <person name="Ramsey Y."/>
            <person name="Ranby S.A."/>
            <person name="Rice C.M."/>
            <person name="Ross M.T."/>
            <person name="Searle S.M."/>
            <person name="Sehra H.K."/>
            <person name="Sheridan E."/>
            <person name="Skuce C.D."/>
            <person name="Smith S."/>
            <person name="Smith M."/>
            <person name="Spraggon L."/>
            <person name="Squares S.L."/>
            <person name="Steward C.A."/>
            <person name="Sycamore N."/>
            <person name="Tamlyn-Hall G."/>
            <person name="Tester J."/>
            <person name="Theaker A.J."/>
            <person name="Thomas D.W."/>
            <person name="Thorpe A."/>
            <person name="Tracey A."/>
            <person name="Tromans A."/>
            <person name="Tubby B."/>
            <person name="Wall M."/>
            <person name="Wallis J.M."/>
            <person name="West A.P."/>
            <person name="White S.S."/>
            <person name="Whitehead S.L."/>
            <person name="Whittaker H."/>
            <person name="Wild A."/>
            <person name="Willey D.J."/>
            <person name="Wilmer T.E."/>
            <person name="Wood J.M."/>
            <person name="Wray P.W."/>
            <person name="Wyatt J.C."/>
            <person name="Young L."/>
            <person name="Younger R.M."/>
            <person name="Bentley D.R."/>
            <person name="Coulson A."/>
            <person name="Durbin R.M."/>
            <person name="Hubbard T."/>
            <person name="Sulston J.E."/>
            <person name="Dunham I."/>
            <person name="Rogers J."/>
            <person name="Beck S."/>
        </authorList>
    </citation>
    <scope>NUCLEOTIDE SEQUENCE [LARGE SCALE GENOMIC DNA]</scope>
</reference>
<reference key="2">
    <citation type="submission" date="2005-09" db="EMBL/GenBank/DDBJ databases">
        <authorList>
            <person name="Mural R.J."/>
            <person name="Istrail S."/>
            <person name="Sutton G.G."/>
            <person name="Florea L."/>
            <person name="Halpern A.L."/>
            <person name="Mobarry C.M."/>
            <person name="Lippert R."/>
            <person name="Walenz B."/>
            <person name="Shatkay H."/>
            <person name="Dew I."/>
            <person name="Miller J.R."/>
            <person name="Flanigan M.J."/>
            <person name="Edwards N.J."/>
            <person name="Bolanos R."/>
            <person name="Fasulo D."/>
            <person name="Halldorsson B.V."/>
            <person name="Hannenhalli S."/>
            <person name="Turner R."/>
            <person name="Yooseph S."/>
            <person name="Lu F."/>
            <person name="Nusskern D.R."/>
            <person name="Shue B.C."/>
            <person name="Zheng X.H."/>
            <person name="Zhong F."/>
            <person name="Delcher A.L."/>
            <person name="Huson D.H."/>
            <person name="Kravitz S.A."/>
            <person name="Mouchard L."/>
            <person name="Reinert K."/>
            <person name="Remington K.A."/>
            <person name="Clark A.G."/>
            <person name="Waterman M.S."/>
            <person name="Eichler E.E."/>
            <person name="Adams M.D."/>
            <person name="Hunkapiller M.W."/>
            <person name="Myers E.W."/>
            <person name="Venter J.C."/>
        </authorList>
    </citation>
    <scope>NUCLEOTIDE SEQUENCE [LARGE SCALE GENOMIC DNA]</scope>
</reference>
<reference key="3">
    <citation type="journal article" date="2004" name="Genome Res.">
        <title>The status, quality, and expansion of the NIH full-length cDNA project: the Mammalian Gene Collection (MGC).</title>
        <authorList>
            <consortium name="The MGC Project Team"/>
        </authorList>
    </citation>
    <scope>NUCLEOTIDE SEQUENCE [LARGE SCALE MRNA] (ISOFORM 2)</scope>
</reference>
<reference key="4">
    <citation type="journal article" date="2011" name="Mol. Biol. Cell">
        <title>C4orf41 and TTC-15 are mammalian TRAPP components with a role at an early stage in ER-to-Golgi trafficking.</title>
        <authorList>
            <person name="Scrivens P.J."/>
            <person name="Noueihed B."/>
            <person name="Shahrzad N."/>
            <person name="Hul S."/>
            <person name="Brunet S."/>
            <person name="Sacher M."/>
        </authorList>
    </citation>
    <scope>IDENTIFICATION IN TRAPP COMPLEX</scope>
</reference>
<protein>
    <recommendedName>
        <fullName>Trafficking protein particle complex subunit 3-like protein</fullName>
        <shortName>TRAPPC3-like protein</shortName>
    </recommendedName>
    <alternativeName>
        <fullName>BET3-like protein</fullName>
    </alternativeName>
</protein>
<accession>Q5T215</accession>
<accession>Q5T213</accession>
<accession>Q5T214</accession>
<proteinExistence type="evidence at protein level"/>
<sequence>MSRPAHRRPEYHKINKDLFVLTYGALVAQLCKDYEKDEDVNQYLDKMGYGIGTRLVEDFLARSCVGRCHSYSEIIDIIAQVAFKMYLGITPSVTCNNSSKNEFSLILEKNPLVEFVEELPAGRSSLCYCNLLCGIIRGALEMVHLAADVTFLQDRLKGDSVTEIGITFLKKRDEKKYRGKK</sequence>
<keyword id="KW-0025">Alternative splicing</keyword>
<keyword id="KW-0256">Endoplasmic reticulum</keyword>
<keyword id="KW-0931">ER-Golgi transport</keyword>
<keyword id="KW-0333">Golgi apparatus</keyword>
<keyword id="KW-0449">Lipoprotein</keyword>
<keyword id="KW-0564">Palmitate</keyword>
<keyword id="KW-1185">Reference proteome</keyword>
<keyword id="KW-0813">Transport</keyword>
<dbReference type="EMBL" id="AL445224">
    <property type="status" value="NOT_ANNOTATED_CDS"/>
    <property type="molecule type" value="Genomic_DNA"/>
</dbReference>
<dbReference type="EMBL" id="AL121953">
    <property type="status" value="NOT_ANNOTATED_CDS"/>
    <property type="molecule type" value="Genomic_DNA"/>
</dbReference>
<dbReference type="EMBL" id="CH471051">
    <property type="protein sequence ID" value="EAW48227.1"/>
    <property type="molecule type" value="Genomic_DNA"/>
</dbReference>
<dbReference type="EMBL" id="BC127757">
    <property type="protein sequence ID" value="AAI27758.1"/>
    <property type="molecule type" value="mRNA"/>
</dbReference>
<dbReference type="EMBL" id="BC127758">
    <property type="protein sequence ID" value="AAI27759.1"/>
    <property type="molecule type" value="mRNA"/>
</dbReference>
<dbReference type="CCDS" id="CCDS47468.1">
    <molecule id="Q5T215-1"/>
</dbReference>
<dbReference type="RefSeq" id="NP_001132916.1">
    <molecule id="Q5T215-1"/>
    <property type="nucleotide sequence ID" value="NM_001139444.3"/>
</dbReference>
<dbReference type="SMR" id="Q5T215"/>
<dbReference type="BioGRID" id="128706">
    <property type="interactions" value="12"/>
</dbReference>
<dbReference type="CORUM" id="Q5T215"/>
<dbReference type="FunCoup" id="Q5T215">
    <property type="interactions" value="67"/>
</dbReference>
<dbReference type="IntAct" id="Q5T215">
    <property type="interactions" value="1"/>
</dbReference>
<dbReference type="STRING" id="9606.ENSP00000357591"/>
<dbReference type="iPTMnet" id="Q5T215"/>
<dbReference type="PhosphoSitePlus" id="Q5T215"/>
<dbReference type="BioMuta" id="TRAPPC3L"/>
<dbReference type="DMDM" id="74744542"/>
<dbReference type="jPOST" id="Q5T215"/>
<dbReference type="PaxDb" id="9606-ENSP00000357591"/>
<dbReference type="PeptideAtlas" id="Q5T215"/>
<dbReference type="ProteomicsDB" id="64304">
    <molecule id="Q5T215-1"/>
</dbReference>
<dbReference type="Antibodypedia" id="55239">
    <property type="antibodies" value="2 antibodies from 2 providers"/>
</dbReference>
<dbReference type="DNASU" id="100128327"/>
<dbReference type="Ensembl" id="ENST00000356128.4">
    <molecule id="Q5T215-2"/>
    <property type="protein sequence ID" value="ENSP00000348445.4"/>
    <property type="gene ID" value="ENSG00000173626.10"/>
</dbReference>
<dbReference type="Ensembl" id="ENST00000368602.4">
    <molecule id="Q5T215-1"/>
    <property type="protein sequence ID" value="ENSP00000357591.3"/>
    <property type="gene ID" value="ENSG00000173626.10"/>
</dbReference>
<dbReference type="GeneID" id="100128327"/>
<dbReference type="KEGG" id="hsa:100128327"/>
<dbReference type="MANE-Select" id="ENST00000368602.4">
    <property type="protein sequence ID" value="ENSP00000357591.3"/>
    <property type="RefSeq nucleotide sequence ID" value="NM_001139444.3"/>
    <property type="RefSeq protein sequence ID" value="NP_001132916.1"/>
</dbReference>
<dbReference type="UCSC" id="uc003pwx.4">
    <molecule id="Q5T215-1"/>
    <property type="organism name" value="human"/>
</dbReference>
<dbReference type="AGR" id="HGNC:21090"/>
<dbReference type="CTD" id="100128327"/>
<dbReference type="GeneCards" id="TRAPPC3L"/>
<dbReference type="HGNC" id="HGNC:21090">
    <property type="gene designation" value="TRAPPC3L"/>
</dbReference>
<dbReference type="HPA" id="ENSG00000173626">
    <property type="expression patterns" value="Low tissue specificity"/>
</dbReference>
<dbReference type="MIM" id="614137">
    <property type="type" value="gene"/>
</dbReference>
<dbReference type="neXtProt" id="NX_Q5T215"/>
<dbReference type="OpenTargets" id="ENSG00000173626"/>
<dbReference type="PharmGKB" id="PA134866254"/>
<dbReference type="VEuPathDB" id="HostDB:ENSG00000173626"/>
<dbReference type="eggNOG" id="KOG3330">
    <property type="taxonomic scope" value="Eukaryota"/>
</dbReference>
<dbReference type="GeneTree" id="ENSGT00390000003880"/>
<dbReference type="HOGENOM" id="CLU_087110_2_0_1"/>
<dbReference type="InParanoid" id="Q5T215"/>
<dbReference type="OMA" id="QRRPEYH"/>
<dbReference type="OrthoDB" id="10262857at2759"/>
<dbReference type="PAN-GO" id="Q5T215">
    <property type="GO annotations" value="5 GO annotations based on evolutionary models"/>
</dbReference>
<dbReference type="PhylomeDB" id="Q5T215"/>
<dbReference type="TreeFam" id="TF300091"/>
<dbReference type="PathwayCommons" id="Q5T215"/>
<dbReference type="SignaLink" id="Q5T215"/>
<dbReference type="BioGRID-ORCS" id="100128327">
    <property type="hits" value="19 hits in 1107 CRISPR screens"/>
</dbReference>
<dbReference type="ChiTaRS" id="TRAPPC3L">
    <property type="organism name" value="human"/>
</dbReference>
<dbReference type="GenomeRNAi" id="100128327"/>
<dbReference type="Pharos" id="Q5T215">
    <property type="development level" value="Tdark"/>
</dbReference>
<dbReference type="PRO" id="PR:Q5T215"/>
<dbReference type="Proteomes" id="UP000005640">
    <property type="component" value="Chromosome 6"/>
</dbReference>
<dbReference type="RNAct" id="Q5T215">
    <property type="molecule type" value="protein"/>
</dbReference>
<dbReference type="Bgee" id="ENSG00000173626">
    <property type="expression patterns" value="Expressed in buccal mucosa cell and 109 other cell types or tissues"/>
</dbReference>
<dbReference type="ExpressionAtlas" id="Q5T215">
    <property type="expression patterns" value="baseline and differential"/>
</dbReference>
<dbReference type="GO" id="GO:0033106">
    <property type="term" value="C:cis-Golgi network membrane"/>
    <property type="evidence" value="ECO:0000318"/>
    <property type="project" value="GO_Central"/>
</dbReference>
<dbReference type="GO" id="GO:0005829">
    <property type="term" value="C:cytosol"/>
    <property type="evidence" value="ECO:0000318"/>
    <property type="project" value="GO_Central"/>
</dbReference>
<dbReference type="GO" id="GO:0005783">
    <property type="term" value="C:endoplasmic reticulum"/>
    <property type="evidence" value="ECO:0007669"/>
    <property type="project" value="UniProtKB-SubCell"/>
</dbReference>
<dbReference type="GO" id="GO:0030008">
    <property type="term" value="C:TRAPP complex"/>
    <property type="evidence" value="ECO:0000314"/>
    <property type="project" value="UniProtKB"/>
</dbReference>
<dbReference type="GO" id="GO:0006888">
    <property type="term" value="P:endoplasmic reticulum to Golgi vesicle-mediated transport"/>
    <property type="evidence" value="ECO:0000318"/>
    <property type="project" value="GO_Central"/>
</dbReference>
<dbReference type="GO" id="GO:0006891">
    <property type="term" value="P:intra-Golgi vesicle-mediated transport"/>
    <property type="evidence" value="ECO:0000318"/>
    <property type="project" value="GO_Central"/>
</dbReference>
<dbReference type="CDD" id="cd14942">
    <property type="entry name" value="TRAPPC3_bet3"/>
    <property type="match status" value="1"/>
</dbReference>
<dbReference type="FunFam" id="3.30.1380.20:FF:000010">
    <property type="entry name" value="Trafficking protein particle complex subunit"/>
    <property type="match status" value="1"/>
</dbReference>
<dbReference type="Gene3D" id="3.30.1380.20">
    <property type="entry name" value="Trafficking protein particle complex subunit 3"/>
    <property type="match status" value="1"/>
</dbReference>
<dbReference type="InterPro" id="IPR016721">
    <property type="entry name" value="Bet3"/>
</dbReference>
<dbReference type="InterPro" id="IPR024096">
    <property type="entry name" value="NO_sig/Golgi_transp_ligand-bd"/>
</dbReference>
<dbReference type="InterPro" id="IPR007194">
    <property type="entry name" value="TRAPP_component"/>
</dbReference>
<dbReference type="PANTHER" id="PTHR13048">
    <property type="entry name" value="TRAFFICKING PROTEIN PARTICLE COMPLEX SUBUNIT 3"/>
    <property type="match status" value="1"/>
</dbReference>
<dbReference type="Pfam" id="PF04051">
    <property type="entry name" value="TRAPP"/>
    <property type="match status" value="1"/>
</dbReference>
<dbReference type="PIRSF" id="PIRSF018293">
    <property type="entry name" value="TRAPP_I_complex_Bet3"/>
    <property type="match status" value="1"/>
</dbReference>
<dbReference type="SUPFAM" id="SSF111126">
    <property type="entry name" value="Ligand-binding domain in the NO signalling and Golgi transport"/>
    <property type="match status" value="1"/>
</dbReference>